<sequence length="250" mass="26955">MHILLANDDGYLAPGLAVLHAALAPLGRITVIAPEQNHSGASNSLTLQRPLSIYEAREGVQKGFRFVNGTPTDCVHIALTGLLDEKPDLVVSGINQGQNMGEDVLYSGTVAAAIEGYLLGIPSIAFSQLHKGWEHLDAAARVARDIVERAIATPPVEPFLLNVNIPNLPFEHIKGYRATRLGKRHPSQPVIAQVNPRGDLNYWIGAAGDARDASEGTDFHATAEGYVSLTPLQLDLTHRSQLEALAQWLN</sequence>
<protein>
    <recommendedName>
        <fullName evidence="1">5'-nucleotidase SurE</fullName>
        <ecNumber evidence="1">3.1.3.5</ecNumber>
    </recommendedName>
    <alternativeName>
        <fullName evidence="1">Nucleoside 5'-monophosphate phosphohydrolase</fullName>
    </alternativeName>
</protein>
<evidence type="ECO:0000255" key="1">
    <source>
        <dbReference type="HAMAP-Rule" id="MF_00060"/>
    </source>
</evidence>
<keyword id="KW-0963">Cytoplasm</keyword>
<keyword id="KW-0378">Hydrolase</keyword>
<keyword id="KW-0479">Metal-binding</keyword>
<keyword id="KW-0547">Nucleotide-binding</keyword>
<feature type="chain" id="PRO_0000235642" description="5'-nucleotidase SurE">
    <location>
        <begin position="1"/>
        <end position="250"/>
    </location>
</feature>
<feature type="binding site" evidence="1">
    <location>
        <position position="8"/>
    </location>
    <ligand>
        <name>a divalent metal cation</name>
        <dbReference type="ChEBI" id="CHEBI:60240"/>
    </ligand>
</feature>
<feature type="binding site" evidence="1">
    <location>
        <position position="9"/>
    </location>
    <ligand>
        <name>a divalent metal cation</name>
        <dbReference type="ChEBI" id="CHEBI:60240"/>
    </ligand>
</feature>
<feature type="binding site" evidence="1">
    <location>
        <position position="39"/>
    </location>
    <ligand>
        <name>a divalent metal cation</name>
        <dbReference type="ChEBI" id="CHEBI:60240"/>
    </ligand>
</feature>
<feature type="binding site" evidence="1">
    <location>
        <position position="95"/>
    </location>
    <ligand>
        <name>a divalent metal cation</name>
        <dbReference type="ChEBI" id="CHEBI:60240"/>
    </ligand>
</feature>
<proteinExistence type="inferred from homology"/>
<gene>
    <name evidence="1" type="primary">surE</name>
    <name type="ordered locus">Reut_A2098</name>
</gene>
<accession>Q46ZH1</accession>
<comment type="function">
    <text evidence="1">Nucleotidase that shows phosphatase activity on nucleoside 5'-monophosphates.</text>
</comment>
<comment type="catalytic activity">
    <reaction evidence="1">
        <text>a ribonucleoside 5'-phosphate + H2O = a ribonucleoside + phosphate</text>
        <dbReference type="Rhea" id="RHEA:12484"/>
        <dbReference type="ChEBI" id="CHEBI:15377"/>
        <dbReference type="ChEBI" id="CHEBI:18254"/>
        <dbReference type="ChEBI" id="CHEBI:43474"/>
        <dbReference type="ChEBI" id="CHEBI:58043"/>
        <dbReference type="EC" id="3.1.3.5"/>
    </reaction>
</comment>
<comment type="cofactor">
    <cofactor evidence="1">
        <name>a divalent metal cation</name>
        <dbReference type="ChEBI" id="CHEBI:60240"/>
    </cofactor>
    <text evidence="1">Binds 1 divalent metal cation per subunit.</text>
</comment>
<comment type="subcellular location">
    <subcellularLocation>
        <location evidence="1">Cytoplasm</location>
    </subcellularLocation>
</comment>
<comment type="similarity">
    <text evidence="1">Belongs to the SurE nucleotidase family.</text>
</comment>
<organism>
    <name type="scientific">Cupriavidus pinatubonensis (strain JMP 134 / LMG 1197)</name>
    <name type="common">Cupriavidus necator (strain JMP 134)</name>
    <dbReference type="NCBI Taxonomy" id="264198"/>
    <lineage>
        <taxon>Bacteria</taxon>
        <taxon>Pseudomonadati</taxon>
        <taxon>Pseudomonadota</taxon>
        <taxon>Betaproteobacteria</taxon>
        <taxon>Burkholderiales</taxon>
        <taxon>Burkholderiaceae</taxon>
        <taxon>Cupriavidus</taxon>
    </lineage>
</organism>
<reference key="1">
    <citation type="journal article" date="2010" name="PLoS ONE">
        <title>The complete multipartite genome sequence of Cupriavidus necator JMP134, a versatile pollutant degrader.</title>
        <authorList>
            <person name="Lykidis A."/>
            <person name="Perez-Pantoja D."/>
            <person name="Ledger T."/>
            <person name="Mavromatis K."/>
            <person name="Anderson I.J."/>
            <person name="Ivanova N.N."/>
            <person name="Hooper S.D."/>
            <person name="Lapidus A."/>
            <person name="Lucas S."/>
            <person name="Gonzalez B."/>
            <person name="Kyrpides N.C."/>
        </authorList>
    </citation>
    <scope>NUCLEOTIDE SEQUENCE [LARGE SCALE GENOMIC DNA]</scope>
    <source>
        <strain>JMP134 / LMG 1197</strain>
    </source>
</reference>
<dbReference type="EC" id="3.1.3.5" evidence="1"/>
<dbReference type="EMBL" id="CP000090">
    <property type="protein sequence ID" value="AAZ61462.1"/>
    <property type="molecule type" value="Genomic_DNA"/>
</dbReference>
<dbReference type="SMR" id="Q46ZH1"/>
<dbReference type="STRING" id="264198.Reut_A2098"/>
<dbReference type="KEGG" id="reu:Reut_A2098"/>
<dbReference type="eggNOG" id="COG0496">
    <property type="taxonomic scope" value="Bacteria"/>
</dbReference>
<dbReference type="HOGENOM" id="CLU_045192_1_2_4"/>
<dbReference type="OrthoDB" id="9780815at2"/>
<dbReference type="GO" id="GO:0005737">
    <property type="term" value="C:cytoplasm"/>
    <property type="evidence" value="ECO:0007669"/>
    <property type="project" value="UniProtKB-SubCell"/>
</dbReference>
<dbReference type="GO" id="GO:0008254">
    <property type="term" value="F:3'-nucleotidase activity"/>
    <property type="evidence" value="ECO:0007669"/>
    <property type="project" value="TreeGrafter"/>
</dbReference>
<dbReference type="GO" id="GO:0008253">
    <property type="term" value="F:5'-nucleotidase activity"/>
    <property type="evidence" value="ECO:0007669"/>
    <property type="project" value="UniProtKB-UniRule"/>
</dbReference>
<dbReference type="GO" id="GO:0004309">
    <property type="term" value="F:exopolyphosphatase activity"/>
    <property type="evidence" value="ECO:0007669"/>
    <property type="project" value="TreeGrafter"/>
</dbReference>
<dbReference type="GO" id="GO:0046872">
    <property type="term" value="F:metal ion binding"/>
    <property type="evidence" value="ECO:0007669"/>
    <property type="project" value="UniProtKB-UniRule"/>
</dbReference>
<dbReference type="GO" id="GO:0000166">
    <property type="term" value="F:nucleotide binding"/>
    <property type="evidence" value="ECO:0007669"/>
    <property type="project" value="UniProtKB-KW"/>
</dbReference>
<dbReference type="FunFam" id="3.40.1210.10:FF:000001">
    <property type="entry name" value="5'/3'-nucleotidase SurE"/>
    <property type="match status" value="1"/>
</dbReference>
<dbReference type="Gene3D" id="3.40.1210.10">
    <property type="entry name" value="Survival protein SurE-like phosphatase/nucleotidase"/>
    <property type="match status" value="1"/>
</dbReference>
<dbReference type="HAMAP" id="MF_00060">
    <property type="entry name" value="SurE"/>
    <property type="match status" value="1"/>
</dbReference>
<dbReference type="InterPro" id="IPR030048">
    <property type="entry name" value="SurE"/>
</dbReference>
<dbReference type="InterPro" id="IPR002828">
    <property type="entry name" value="SurE-like_Pase/nucleotidase"/>
</dbReference>
<dbReference type="InterPro" id="IPR036523">
    <property type="entry name" value="SurE-like_sf"/>
</dbReference>
<dbReference type="NCBIfam" id="NF001489">
    <property type="entry name" value="PRK00346.1-3"/>
    <property type="match status" value="1"/>
</dbReference>
<dbReference type="NCBIfam" id="NF001490">
    <property type="entry name" value="PRK00346.1-4"/>
    <property type="match status" value="1"/>
</dbReference>
<dbReference type="NCBIfam" id="TIGR00087">
    <property type="entry name" value="surE"/>
    <property type="match status" value="1"/>
</dbReference>
<dbReference type="PANTHER" id="PTHR30457">
    <property type="entry name" value="5'-NUCLEOTIDASE SURE"/>
    <property type="match status" value="1"/>
</dbReference>
<dbReference type="PANTHER" id="PTHR30457:SF12">
    <property type="entry name" value="5'_3'-NUCLEOTIDASE SURE"/>
    <property type="match status" value="1"/>
</dbReference>
<dbReference type="Pfam" id="PF01975">
    <property type="entry name" value="SurE"/>
    <property type="match status" value="1"/>
</dbReference>
<dbReference type="SUPFAM" id="SSF64167">
    <property type="entry name" value="SurE-like"/>
    <property type="match status" value="1"/>
</dbReference>
<name>SURE_CUPPJ</name>